<comment type="catalytic activity">
    <reaction evidence="1">
        <text>tRNA(Phe) + L-phenylalanine + ATP = L-phenylalanyl-tRNA(Phe) + AMP + diphosphate + H(+)</text>
        <dbReference type="Rhea" id="RHEA:19413"/>
        <dbReference type="Rhea" id="RHEA-COMP:9668"/>
        <dbReference type="Rhea" id="RHEA-COMP:9699"/>
        <dbReference type="ChEBI" id="CHEBI:15378"/>
        <dbReference type="ChEBI" id="CHEBI:30616"/>
        <dbReference type="ChEBI" id="CHEBI:33019"/>
        <dbReference type="ChEBI" id="CHEBI:58095"/>
        <dbReference type="ChEBI" id="CHEBI:78442"/>
        <dbReference type="ChEBI" id="CHEBI:78531"/>
        <dbReference type="ChEBI" id="CHEBI:456215"/>
        <dbReference type="EC" id="6.1.1.20"/>
    </reaction>
</comment>
<comment type="cofactor">
    <cofactor evidence="1">
        <name>Mg(2+)</name>
        <dbReference type="ChEBI" id="CHEBI:18420"/>
    </cofactor>
    <text evidence="1">Binds 2 magnesium ions per tetramer.</text>
</comment>
<comment type="subunit">
    <text evidence="1">Tetramer of two alpha and two beta subunits.</text>
</comment>
<comment type="subcellular location">
    <subcellularLocation>
        <location evidence="1">Cytoplasm</location>
    </subcellularLocation>
</comment>
<comment type="similarity">
    <text evidence="1">Belongs to the class-II aminoacyl-tRNA synthetase family. Phe-tRNA synthetase alpha subunit type 1 subfamily.</text>
</comment>
<proteinExistence type="inferred from homology"/>
<evidence type="ECO:0000255" key="1">
    <source>
        <dbReference type="HAMAP-Rule" id="MF_00281"/>
    </source>
</evidence>
<accession>B3WF19</accession>
<sequence length="348" mass="39119">MDLQTKLEQLFQQNNDTIKKVKSLDELNQIRVQLLGKKGPITGVLRGMKDLSAEERPKVGAFANKIRDDLSAVIEARKAQLEQAVINAKLASETVDVTLPGDPVEAGTPHIITQIMDDLEGFFMGMGYQVLTGPEVEEDHYNFEMMNIPKDHPARDMQETFYITNELLMRSQTSPMQARTMEKHDFTKGPLKMISPGVVYRRDDDDATHSHQFHQMEGLVIDKHITMADLKGTLLAMCQHVFGKDRTIRLRPSYFPFTEPSVEVDVSCFRCGGKGCPVCKYTGWIEVLGAGMVHPNVLQAANIDADVYGGFAFGLGPDRFAMLKYGIDDIRSFYTDDLRFLTQFSQEG</sequence>
<organism>
    <name type="scientific">Lacticaseibacillus casei (strain BL23)</name>
    <name type="common">Lactobacillus casei</name>
    <dbReference type="NCBI Taxonomy" id="543734"/>
    <lineage>
        <taxon>Bacteria</taxon>
        <taxon>Bacillati</taxon>
        <taxon>Bacillota</taxon>
        <taxon>Bacilli</taxon>
        <taxon>Lactobacillales</taxon>
        <taxon>Lactobacillaceae</taxon>
        <taxon>Lacticaseibacillus</taxon>
    </lineage>
</organism>
<gene>
    <name evidence="1" type="primary">pheS</name>
    <name type="ordered locus">LCABL_18910</name>
</gene>
<name>SYFA_LACCB</name>
<feature type="chain" id="PRO_1000114884" description="Phenylalanine--tRNA ligase alpha subunit">
    <location>
        <begin position="1"/>
        <end position="348"/>
    </location>
</feature>
<feature type="binding site" evidence="1">
    <location>
        <position position="259"/>
    </location>
    <ligand>
        <name>Mg(2+)</name>
        <dbReference type="ChEBI" id="CHEBI:18420"/>
        <note>shared with beta subunit</note>
    </ligand>
</feature>
<protein>
    <recommendedName>
        <fullName evidence="1">Phenylalanine--tRNA ligase alpha subunit</fullName>
        <ecNumber evidence="1">6.1.1.20</ecNumber>
    </recommendedName>
    <alternativeName>
        <fullName evidence="1">Phenylalanyl-tRNA synthetase alpha subunit</fullName>
        <shortName evidence="1">PheRS</shortName>
    </alternativeName>
</protein>
<keyword id="KW-0030">Aminoacyl-tRNA synthetase</keyword>
<keyword id="KW-0067">ATP-binding</keyword>
<keyword id="KW-0963">Cytoplasm</keyword>
<keyword id="KW-0436">Ligase</keyword>
<keyword id="KW-0460">Magnesium</keyword>
<keyword id="KW-0479">Metal-binding</keyword>
<keyword id="KW-0547">Nucleotide-binding</keyword>
<keyword id="KW-0648">Protein biosynthesis</keyword>
<dbReference type="EC" id="6.1.1.20" evidence="1"/>
<dbReference type="EMBL" id="FM177140">
    <property type="protein sequence ID" value="CAQ66970.1"/>
    <property type="molecule type" value="Genomic_DNA"/>
</dbReference>
<dbReference type="SMR" id="B3WF19"/>
<dbReference type="KEGG" id="lcb:LCABL_18910"/>
<dbReference type="HOGENOM" id="CLU_025086_0_1_9"/>
<dbReference type="GO" id="GO:0005737">
    <property type="term" value="C:cytoplasm"/>
    <property type="evidence" value="ECO:0007669"/>
    <property type="project" value="UniProtKB-SubCell"/>
</dbReference>
<dbReference type="GO" id="GO:0005524">
    <property type="term" value="F:ATP binding"/>
    <property type="evidence" value="ECO:0007669"/>
    <property type="project" value="UniProtKB-UniRule"/>
</dbReference>
<dbReference type="GO" id="GO:0140096">
    <property type="term" value="F:catalytic activity, acting on a protein"/>
    <property type="evidence" value="ECO:0007669"/>
    <property type="project" value="UniProtKB-ARBA"/>
</dbReference>
<dbReference type="GO" id="GO:0000287">
    <property type="term" value="F:magnesium ion binding"/>
    <property type="evidence" value="ECO:0007669"/>
    <property type="project" value="UniProtKB-UniRule"/>
</dbReference>
<dbReference type="GO" id="GO:0004826">
    <property type="term" value="F:phenylalanine-tRNA ligase activity"/>
    <property type="evidence" value="ECO:0007669"/>
    <property type="project" value="UniProtKB-UniRule"/>
</dbReference>
<dbReference type="GO" id="GO:0016740">
    <property type="term" value="F:transferase activity"/>
    <property type="evidence" value="ECO:0007669"/>
    <property type="project" value="UniProtKB-ARBA"/>
</dbReference>
<dbReference type="GO" id="GO:0000049">
    <property type="term" value="F:tRNA binding"/>
    <property type="evidence" value="ECO:0007669"/>
    <property type="project" value="InterPro"/>
</dbReference>
<dbReference type="GO" id="GO:0006432">
    <property type="term" value="P:phenylalanyl-tRNA aminoacylation"/>
    <property type="evidence" value="ECO:0007669"/>
    <property type="project" value="UniProtKB-UniRule"/>
</dbReference>
<dbReference type="CDD" id="cd00496">
    <property type="entry name" value="PheRS_alpha_core"/>
    <property type="match status" value="1"/>
</dbReference>
<dbReference type="FunFam" id="3.30.930.10:FF:000003">
    <property type="entry name" value="Phenylalanine--tRNA ligase alpha subunit"/>
    <property type="match status" value="1"/>
</dbReference>
<dbReference type="Gene3D" id="3.30.930.10">
    <property type="entry name" value="Bira Bifunctional Protein, Domain 2"/>
    <property type="match status" value="1"/>
</dbReference>
<dbReference type="HAMAP" id="MF_00281">
    <property type="entry name" value="Phe_tRNA_synth_alpha1"/>
    <property type="match status" value="1"/>
</dbReference>
<dbReference type="InterPro" id="IPR006195">
    <property type="entry name" value="aa-tRNA-synth_II"/>
</dbReference>
<dbReference type="InterPro" id="IPR045864">
    <property type="entry name" value="aa-tRNA-synth_II/BPL/LPL"/>
</dbReference>
<dbReference type="InterPro" id="IPR004529">
    <property type="entry name" value="Phe-tRNA-synth_IIc_asu"/>
</dbReference>
<dbReference type="InterPro" id="IPR004188">
    <property type="entry name" value="Phe-tRNA_ligase_II_N"/>
</dbReference>
<dbReference type="InterPro" id="IPR022911">
    <property type="entry name" value="Phe_tRNA_ligase_alpha1_bac"/>
</dbReference>
<dbReference type="InterPro" id="IPR002319">
    <property type="entry name" value="Phenylalanyl-tRNA_Synthase"/>
</dbReference>
<dbReference type="InterPro" id="IPR010978">
    <property type="entry name" value="tRNA-bd_arm"/>
</dbReference>
<dbReference type="NCBIfam" id="TIGR00468">
    <property type="entry name" value="pheS"/>
    <property type="match status" value="1"/>
</dbReference>
<dbReference type="PANTHER" id="PTHR11538:SF41">
    <property type="entry name" value="PHENYLALANINE--TRNA LIGASE, MITOCHONDRIAL"/>
    <property type="match status" value="1"/>
</dbReference>
<dbReference type="PANTHER" id="PTHR11538">
    <property type="entry name" value="PHENYLALANYL-TRNA SYNTHETASE"/>
    <property type="match status" value="1"/>
</dbReference>
<dbReference type="Pfam" id="PF02912">
    <property type="entry name" value="Phe_tRNA-synt_N"/>
    <property type="match status" value="1"/>
</dbReference>
<dbReference type="Pfam" id="PF01409">
    <property type="entry name" value="tRNA-synt_2d"/>
    <property type="match status" value="1"/>
</dbReference>
<dbReference type="SUPFAM" id="SSF55681">
    <property type="entry name" value="Class II aaRS and biotin synthetases"/>
    <property type="match status" value="1"/>
</dbReference>
<dbReference type="SUPFAM" id="SSF46589">
    <property type="entry name" value="tRNA-binding arm"/>
    <property type="match status" value="1"/>
</dbReference>
<dbReference type="PROSITE" id="PS50862">
    <property type="entry name" value="AA_TRNA_LIGASE_II"/>
    <property type="match status" value="1"/>
</dbReference>
<reference key="1">
    <citation type="submission" date="2008-06" db="EMBL/GenBank/DDBJ databases">
        <title>Lactobacillus casei BL23 complete genome sequence.</title>
        <authorList>
            <person name="Maze A."/>
            <person name="Boel G."/>
            <person name="Bourand A."/>
            <person name="Loux V."/>
            <person name="Gibrat J.F."/>
            <person name="Zuniga M."/>
            <person name="Hartke A."/>
            <person name="Deutscher J."/>
        </authorList>
    </citation>
    <scope>NUCLEOTIDE SEQUENCE [LARGE SCALE GENOMIC DNA]</scope>
    <source>
        <strain>BL23</strain>
    </source>
</reference>